<gene>
    <name evidence="1" type="primary">nagK</name>
    <name type="ordered locus">EcolC_2482</name>
</gene>
<proteinExistence type="inferred from homology"/>
<feature type="chain" id="PRO_1000085841" description="N-acetyl-D-glucosamine kinase">
    <location>
        <begin position="1"/>
        <end position="303"/>
    </location>
</feature>
<feature type="binding site" evidence="1">
    <location>
        <begin position="4"/>
        <end position="11"/>
    </location>
    <ligand>
        <name>ATP</name>
        <dbReference type="ChEBI" id="CHEBI:30616"/>
    </ligand>
</feature>
<feature type="binding site" evidence="1">
    <location>
        <begin position="133"/>
        <end position="140"/>
    </location>
    <ligand>
        <name>ATP</name>
        <dbReference type="ChEBI" id="CHEBI:30616"/>
    </ligand>
</feature>
<feature type="binding site" evidence="1">
    <location>
        <position position="157"/>
    </location>
    <ligand>
        <name>Zn(2+)</name>
        <dbReference type="ChEBI" id="CHEBI:29105"/>
    </ligand>
</feature>
<feature type="binding site" evidence="1">
    <location>
        <position position="177"/>
    </location>
    <ligand>
        <name>Zn(2+)</name>
        <dbReference type="ChEBI" id="CHEBI:29105"/>
    </ligand>
</feature>
<feature type="binding site" evidence="1">
    <location>
        <position position="179"/>
    </location>
    <ligand>
        <name>Zn(2+)</name>
        <dbReference type="ChEBI" id="CHEBI:29105"/>
    </ligand>
</feature>
<feature type="binding site" evidence="1">
    <location>
        <position position="184"/>
    </location>
    <ligand>
        <name>Zn(2+)</name>
        <dbReference type="ChEBI" id="CHEBI:29105"/>
    </ligand>
</feature>
<organism>
    <name type="scientific">Escherichia coli (strain ATCC 8739 / DSM 1576 / NBRC 3972 / NCIMB 8545 / WDCM 00012 / Crooks)</name>
    <dbReference type="NCBI Taxonomy" id="481805"/>
    <lineage>
        <taxon>Bacteria</taxon>
        <taxon>Pseudomonadati</taxon>
        <taxon>Pseudomonadota</taxon>
        <taxon>Gammaproteobacteria</taxon>
        <taxon>Enterobacterales</taxon>
        <taxon>Enterobacteriaceae</taxon>
        <taxon>Escherichia</taxon>
    </lineage>
</organism>
<sequence length="303" mass="33013">MYYGFDIGGTKIALGVFDSGRQLQWEKRVPTPRDSYDAFLDAVCELVAEADQRFGCKGSVGIGIPGMPETEDGTLYAANVPAASGKPLRADLSARLDRDVRLDNDANCFALSEAWDDEFTQYPLVMGLILGTGVGGGLIFNGKPITGKSYITGEFGHMRLPVDALTMMGLDFPLRRCGCGQHGCIENYLSGRGFAWLYQHYYHQPLQAPEIIALYDQGDEQARAHVERYLDLLAVCLGNILTIVDPDLVVIGGGLSNFPAITAQLADRLPRHLLPVARVPRIERARHGDAGGMRGAAFLHLTD</sequence>
<name>NAGK_ECOLC</name>
<protein>
    <recommendedName>
        <fullName evidence="1">N-acetyl-D-glucosamine kinase</fullName>
        <ecNumber evidence="1">2.7.1.59</ecNumber>
    </recommendedName>
    <alternativeName>
        <fullName evidence="1">GlcNAc kinase</fullName>
    </alternativeName>
</protein>
<keyword id="KW-0067">ATP-binding</keyword>
<keyword id="KW-0119">Carbohydrate metabolism</keyword>
<keyword id="KW-0418">Kinase</keyword>
<keyword id="KW-0479">Metal-binding</keyword>
<keyword id="KW-0547">Nucleotide-binding</keyword>
<keyword id="KW-0808">Transferase</keyword>
<keyword id="KW-0862">Zinc</keyword>
<comment type="function">
    <text evidence="1">Catalyzes the phosphorylation of N-acetyl-D-glucosamine (GlcNAc) derived from cell-wall degradation, yielding GlcNAc-6-P.</text>
</comment>
<comment type="catalytic activity">
    <reaction evidence="1">
        <text>N-acetyl-D-glucosamine + ATP = N-acetyl-D-glucosamine 6-phosphate + ADP + H(+)</text>
        <dbReference type="Rhea" id="RHEA:17417"/>
        <dbReference type="ChEBI" id="CHEBI:15378"/>
        <dbReference type="ChEBI" id="CHEBI:30616"/>
        <dbReference type="ChEBI" id="CHEBI:57513"/>
        <dbReference type="ChEBI" id="CHEBI:456216"/>
        <dbReference type="ChEBI" id="CHEBI:506227"/>
        <dbReference type="EC" id="2.7.1.59"/>
    </reaction>
</comment>
<comment type="pathway">
    <text evidence="1">Cell wall biogenesis; peptidoglycan recycling.</text>
</comment>
<comment type="similarity">
    <text evidence="1">Belongs to the ROK (NagC/XylR) family. NagK subfamily.</text>
</comment>
<evidence type="ECO:0000255" key="1">
    <source>
        <dbReference type="HAMAP-Rule" id="MF_01271"/>
    </source>
</evidence>
<accession>B1IUE6</accession>
<dbReference type="EC" id="2.7.1.59" evidence="1"/>
<dbReference type="EMBL" id="CP000946">
    <property type="protein sequence ID" value="ACA78113.1"/>
    <property type="molecule type" value="Genomic_DNA"/>
</dbReference>
<dbReference type="RefSeq" id="WP_000291268.1">
    <property type="nucleotide sequence ID" value="NZ_MTFT01000032.1"/>
</dbReference>
<dbReference type="SMR" id="B1IUE6"/>
<dbReference type="KEGG" id="ecl:EcolC_2482"/>
<dbReference type="HOGENOM" id="CLU_036604_0_3_6"/>
<dbReference type="UniPathway" id="UPA00544"/>
<dbReference type="GO" id="GO:0005524">
    <property type="term" value="F:ATP binding"/>
    <property type="evidence" value="ECO:0007669"/>
    <property type="project" value="UniProtKB-UniRule"/>
</dbReference>
<dbReference type="GO" id="GO:0045127">
    <property type="term" value="F:N-acetylglucosamine kinase activity"/>
    <property type="evidence" value="ECO:0007669"/>
    <property type="project" value="UniProtKB-UniRule"/>
</dbReference>
<dbReference type="GO" id="GO:0008270">
    <property type="term" value="F:zinc ion binding"/>
    <property type="evidence" value="ECO:0007669"/>
    <property type="project" value="UniProtKB-UniRule"/>
</dbReference>
<dbReference type="GO" id="GO:0006044">
    <property type="term" value="P:N-acetylglucosamine metabolic process"/>
    <property type="evidence" value="ECO:0007669"/>
    <property type="project" value="UniProtKB-UniRule"/>
</dbReference>
<dbReference type="GO" id="GO:0009254">
    <property type="term" value="P:peptidoglycan turnover"/>
    <property type="evidence" value="ECO:0007669"/>
    <property type="project" value="UniProtKB-UniRule"/>
</dbReference>
<dbReference type="CDD" id="cd24057">
    <property type="entry name" value="ASKHA_NBD_ROK_NAGK"/>
    <property type="match status" value="1"/>
</dbReference>
<dbReference type="FunFam" id="3.30.420.40:FF:000049">
    <property type="entry name" value="N-acetyl-D-glucosamine kinase"/>
    <property type="match status" value="1"/>
</dbReference>
<dbReference type="FunFam" id="3.30.420.40:FF:000051">
    <property type="entry name" value="N-acetyl-D-glucosamine kinase"/>
    <property type="match status" value="1"/>
</dbReference>
<dbReference type="Gene3D" id="3.30.420.40">
    <property type="match status" value="2"/>
</dbReference>
<dbReference type="HAMAP" id="MF_01271">
    <property type="entry name" value="GlcNAc_kinase"/>
    <property type="match status" value="1"/>
</dbReference>
<dbReference type="InterPro" id="IPR043129">
    <property type="entry name" value="ATPase_NBD"/>
</dbReference>
<dbReference type="InterPro" id="IPR023505">
    <property type="entry name" value="N-acetyl-D-glucosamine_kinase"/>
</dbReference>
<dbReference type="InterPro" id="IPR000600">
    <property type="entry name" value="ROK"/>
</dbReference>
<dbReference type="InterPro" id="IPR049874">
    <property type="entry name" value="ROK_cs"/>
</dbReference>
<dbReference type="NCBIfam" id="NF009835">
    <property type="entry name" value="PRK13310.1"/>
    <property type="match status" value="1"/>
</dbReference>
<dbReference type="PANTHER" id="PTHR18964:SF162">
    <property type="entry name" value="N-ACETYL-D-GLUCOSAMINE KINASE"/>
    <property type="match status" value="1"/>
</dbReference>
<dbReference type="PANTHER" id="PTHR18964">
    <property type="entry name" value="ROK (REPRESSOR, ORF, KINASE) FAMILY"/>
    <property type="match status" value="1"/>
</dbReference>
<dbReference type="Pfam" id="PF00480">
    <property type="entry name" value="ROK"/>
    <property type="match status" value="1"/>
</dbReference>
<dbReference type="SUPFAM" id="SSF53067">
    <property type="entry name" value="Actin-like ATPase domain"/>
    <property type="match status" value="1"/>
</dbReference>
<dbReference type="PROSITE" id="PS01125">
    <property type="entry name" value="ROK"/>
    <property type="match status" value="1"/>
</dbReference>
<reference key="1">
    <citation type="submission" date="2008-02" db="EMBL/GenBank/DDBJ databases">
        <title>Complete sequence of Escherichia coli C str. ATCC 8739.</title>
        <authorList>
            <person name="Copeland A."/>
            <person name="Lucas S."/>
            <person name="Lapidus A."/>
            <person name="Glavina del Rio T."/>
            <person name="Dalin E."/>
            <person name="Tice H."/>
            <person name="Bruce D."/>
            <person name="Goodwin L."/>
            <person name="Pitluck S."/>
            <person name="Kiss H."/>
            <person name="Brettin T."/>
            <person name="Detter J.C."/>
            <person name="Han C."/>
            <person name="Kuske C.R."/>
            <person name="Schmutz J."/>
            <person name="Larimer F."/>
            <person name="Land M."/>
            <person name="Hauser L."/>
            <person name="Kyrpides N."/>
            <person name="Mikhailova N."/>
            <person name="Ingram L."/>
            <person name="Richardson P."/>
        </authorList>
    </citation>
    <scope>NUCLEOTIDE SEQUENCE [LARGE SCALE GENOMIC DNA]</scope>
    <source>
        <strain>ATCC 8739 / DSM 1576 / NBRC 3972 / NCIMB 8545 / WDCM 00012 / Crooks</strain>
    </source>
</reference>